<sequence length="395" mass="42867">MAWRHLKKRAQDAVIILGGGGLLFASYLMATGDERFYAEHLMPTLQGLLDPESAHRLAVRFTSLGLLPRARFQDSDMLEVRVLGHKFRNPVGIAAGFDKHGEAVDGLYKMGFGFVEIGSVTPKPQEGNPRPRVFRLPEDQAVINRYGFNSHGLSVVEHRLRARQQKQAKLTEDGLPLGVNLGKNKTSVDAAEDYAEGVRVLGPLADYLVVNVSSPNTAGLRSLQGKAELRRLLTKVLQERDGLRRVHRPAVLVKIAPDLTSQDKEDIASVVKELGIDGLIVTNTTVSRPAGLQGALRSETGGLSGKPLRDLSTQTIREMYALTQGRVPIIGVGGVSSGQDALEKIRAGASLVQLYTALTFWGPPVVGKVKRELEALLKEQGFGGVTDAIGADHRR</sequence>
<proteinExistence type="evidence at protein level"/>
<reference key="1">
    <citation type="journal article" date="1992" name="Gene">
        <title>Cloning and sequencing of a human cDNA coding for dihydroorotate dehydrogenase by complementation of the corresponding yeast mutant.</title>
        <authorList>
            <person name="Minet M."/>
            <person name="Dufour M.E."/>
            <person name="Lacroute F."/>
        </authorList>
    </citation>
    <scope>NUCLEOTIDE SEQUENCE [MRNA]</scope>
    <scope>VARIANT GLN-7</scope>
</reference>
<reference key="2">
    <citation type="journal article" date="1995" name="Arch. Biochem. Biophys.">
        <title>Recombinant human dihydroorotate dehydrogenase: expression, purification, and characterization of a catalytically functional truncated enzyme.</title>
        <authorList>
            <person name="Copeland R.A."/>
            <person name="Davis J.P."/>
            <person name="Dowling R.L."/>
            <person name="Lombardo D."/>
            <person name="Murphy K.B."/>
            <person name="Patterson T.A."/>
        </authorList>
    </citation>
    <scope>NUCLEOTIDE SEQUENCE [MRNA]</scope>
    <scope>CHARACTERIZATION</scope>
</reference>
<reference key="3">
    <citation type="journal article" date="2004" name="Nat. Genet.">
        <title>Complete sequencing and characterization of 21,243 full-length human cDNAs.</title>
        <authorList>
            <person name="Ota T."/>
            <person name="Suzuki Y."/>
            <person name="Nishikawa T."/>
            <person name="Otsuki T."/>
            <person name="Sugiyama T."/>
            <person name="Irie R."/>
            <person name="Wakamatsu A."/>
            <person name="Hayashi K."/>
            <person name="Sato H."/>
            <person name="Nagai K."/>
            <person name="Kimura K."/>
            <person name="Makita H."/>
            <person name="Sekine M."/>
            <person name="Obayashi M."/>
            <person name="Nishi T."/>
            <person name="Shibahara T."/>
            <person name="Tanaka T."/>
            <person name="Ishii S."/>
            <person name="Yamamoto J."/>
            <person name="Saito K."/>
            <person name="Kawai Y."/>
            <person name="Isono Y."/>
            <person name="Nakamura Y."/>
            <person name="Nagahari K."/>
            <person name="Murakami K."/>
            <person name="Yasuda T."/>
            <person name="Iwayanagi T."/>
            <person name="Wagatsuma M."/>
            <person name="Shiratori A."/>
            <person name="Sudo H."/>
            <person name="Hosoiri T."/>
            <person name="Kaku Y."/>
            <person name="Kodaira H."/>
            <person name="Kondo H."/>
            <person name="Sugawara M."/>
            <person name="Takahashi M."/>
            <person name="Kanda K."/>
            <person name="Yokoi T."/>
            <person name="Furuya T."/>
            <person name="Kikkawa E."/>
            <person name="Omura Y."/>
            <person name="Abe K."/>
            <person name="Kamihara K."/>
            <person name="Katsuta N."/>
            <person name="Sato K."/>
            <person name="Tanikawa M."/>
            <person name="Yamazaki M."/>
            <person name="Ninomiya K."/>
            <person name="Ishibashi T."/>
            <person name="Yamashita H."/>
            <person name="Murakawa K."/>
            <person name="Fujimori K."/>
            <person name="Tanai H."/>
            <person name="Kimata M."/>
            <person name="Watanabe M."/>
            <person name="Hiraoka S."/>
            <person name="Chiba Y."/>
            <person name="Ishida S."/>
            <person name="Ono Y."/>
            <person name="Takiguchi S."/>
            <person name="Watanabe S."/>
            <person name="Yosida M."/>
            <person name="Hotuta T."/>
            <person name="Kusano J."/>
            <person name="Kanehori K."/>
            <person name="Takahashi-Fujii A."/>
            <person name="Hara H."/>
            <person name="Tanase T.-O."/>
            <person name="Nomura Y."/>
            <person name="Togiya S."/>
            <person name="Komai F."/>
            <person name="Hara R."/>
            <person name="Takeuchi K."/>
            <person name="Arita M."/>
            <person name="Imose N."/>
            <person name="Musashino K."/>
            <person name="Yuuki H."/>
            <person name="Oshima A."/>
            <person name="Sasaki N."/>
            <person name="Aotsuka S."/>
            <person name="Yoshikawa Y."/>
            <person name="Matsunawa H."/>
            <person name="Ichihara T."/>
            <person name="Shiohata N."/>
            <person name="Sano S."/>
            <person name="Moriya S."/>
            <person name="Momiyama H."/>
            <person name="Satoh N."/>
            <person name="Takami S."/>
            <person name="Terashima Y."/>
            <person name="Suzuki O."/>
            <person name="Nakagawa S."/>
            <person name="Senoh A."/>
            <person name="Mizoguchi H."/>
            <person name="Goto Y."/>
            <person name="Shimizu F."/>
            <person name="Wakebe H."/>
            <person name="Hishigaki H."/>
            <person name="Watanabe T."/>
            <person name="Sugiyama A."/>
            <person name="Takemoto M."/>
            <person name="Kawakami B."/>
            <person name="Yamazaki M."/>
            <person name="Watanabe K."/>
            <person name="Kumagai A."/>
            <person name="Itakura S."/>
            <person name="Fukuzumi Y."/>
            <person name="Fujimori Y."/>
            <person name="Komiyama M."/>
            <person name="Tashiro H."/>
            <person name="Tanigami A."/>
            <person name="Fujiwara T."/>
            <person name="Ono T."/>
            <person name="Yamada K."/>
            <person name="Fujii Y."/>
            <person name="Ozaki K."/>
            <person name="Hirao M."/>
            <person name="Ohmori Y."/>
            <person name="Kawabata A."/>
            <person name="Hikiji T."/>
            <person name="Kobatake N."/>
            <person name="Inagaki H."/>
            <person name="Ikema Y."/>
            <person name="Okamoto S."/>
            <person name="Okitani R."/>
            <person name="Kawakami T."/>
            <person name="Noguchi S."/>
            <person name="Itoh T."/>
            <person name="Shigeta K."/>
            <person name="Senba T."/>
            <person name="Matsumura K."/>
            <person name="Nakajima Y."/>
            <person name="Mizuno T."/>
            <person name="Morinaga M."/>
            <person name="Sasaki M."/>
            <person name="Togashi T."/>
            <person name="Oyama M."/>
            <person name="Hata H."/>
            <person name="Watanabe M."/>
            <person name="Komatsu T."/>
            <person name="Mizushima-Sugano J."/>
            <person name="Satoh T."/>
            <person name="Shirai Y."/>
            <person name="Takahashi Y."/>
            <person name="Nakagawa K."/>
            <person name="Okumura K."/>
            <person name="Nagase T."/>
            <person name="Nomura N."/>
            <person name="Kikuchi H."/>
            <person name="Masuho Y."/>
            <person name="Yamashita R."/>
            <person name="Nakai K."/>
            <person name="Yada T."/>
            <person name="Nakamura Y."/>
            <person name="Ohara O."/>
            <person name="Isogai T."/>
            <person name="Sugano S."/>
        </authorList>
    </citation>
    <scope>NUCLEOTIDE SEQUENCE [LARGE SCALE MRNA]</scope>
    <scope>VARIANT GLN-7</scope>
    <source>
        <tissue>Testis</tissue>
    </source>
</reference>
<reference key="4">
    <citation type="journal article" date="2004" name="Genome Res.">
        <title>The status, quality, and expansion of the NIH full-length cDNA project: the Mammalian Gene Collection (MGC).</title>
        <authorList>
            <consortium name="The MGC Project Team"/>
        </authorList>
    </citation>
    <scope>NUCLEOTIDE SEQUENCE [LARGE SCALE MRNA]</scope>
    <source>
        <tissue>Skin</tissue>
    </source>
</reference>
<reference key="5">
    <citation type="journal article" date="1996" name="Eur. J. Biochem.">
        <title>Functional expression of a fragment of human dihydroorotate dehydrogenase by means of the baculovirus expression vector system, and kinetic investigation of the purified recombinant enzyme.</title>
        <authorList>
            <person name="Knecht W."/>
            <person name="Bergjohann U."/>
            <person name="Gonski S."/>
            <person name="Kirschbaum B."/>
            <person name="Loeffler M."/>
        </authorList>
    </citation>
    <scope>FUNCTION</scope>
    <scope>CATALYTIC ACTIVITY</scope>
</reference>
<reference key="6">
    <citation type="journal article" date="2000" name="Eur. J. Biochem.">
        <title>Requirements for the mitochondrial import and localization of dihydroorotate dehydrogenase.</title>
        <authorList>
            <person name="Rawls J."/>
            <person name="Knecht W."/>
            <person name="Diekert K."/>
            <person name="Lill R."/>
            <person name="Loeffler M."/>
        </authorList>
    </citation>
    <scope>SUBCELLULAR LOCATION</scope>
</reference>
<reference key="7">
    <citation type="journal article" date="2011" name="BMC Syst. Biol.">
        <title>Initial characterization of the human central proteome.</title>
        <authorList>
            <person name="Burkard T.R."/>
            <person name="Planyavsky M."/>
            <person name="Kaupe I."/>
            <person name="Breitwieser F.P."/>
            <person name="Buerckstuemmer T."/>
            <person name="Bennett K.L."/>
            <person name="Superti-Furga G."/>
            <person name="Colinge J."/>
        </authorList>
    </citation>
    <scope>IDENTIFICATION BY MASS SPECTROMETRY [LARGE SCALE ANALYSIS]</scope>
</reference>
<reference key="8">
    <citation type="journal article" date="2014" name="J. Proteomics">
        <title>An enzyme assisted RP-RPLC approach for in-depth analysis of human liver phosphoproteome.</title>
        <authorList>
            <person name="Bian Y."/>
            <person name="Song C."/>
            <person name="Cheng K."/>
            <person name="Dong M."/>
            <person name="Wang F."/>
            <person name="Huang J."/>
            <person name="Sun D."/>
            <person name="Wang L."/>
            <person name="Ye M."/>
            <person name="Zou H."/>
        </authorList>
    </citation>
    <scope>IDENTIFICATION BY MASS SPECTROMETRY [LARGE SCALE ANALYSIS]</scope>
    <source>
        <tissue>Liver</tissue>
    </source>
</reference>
<reference key="9">
    <citation type="journal article" date="2015" name="Proteomics">
        <title>N-terminome analysis of the human mitochondrial proteome.</title>
        <authorList>
            <person name="Vaca Jacome A.S."/>
            <person name="Rabilloud T."/>
            <person name="Schaeffer-Reiss C."/>
            <person name="Rompais M."/>
            <person name="Ayoub D."/>
            <person name="Lane L."/>
            <person name="Bairoch A."/>
            <person name="Van Dorsselaer A."/>
            <person name="Carapito C."/>
        </authorList>
    </citation>
    <scope>IDENTIFICATION BY MASS SPECTROMETRY [LARGE SCALE ANALYSIS]</scope>
</reference>
<reference key="10">
    <citation type="journal article" date="2000" name="Structure">
        <title>Structures of human dihydroorotate dehydrogenase in complex with antiproliferative agents.</title>
        <authorList>
            <person name="Liu S."/>
            <person name="Neidhardt E.A."/>
            <person name="Grossman T.H."/>
            <person name="Ocain T."/>
            <person name="Clardy J."/>
        </authorList>
    </citation>
    <scope>X-RAY CRYSTALLOGRAPHY (1.6 ANGSTROMS) OF 29-395 IN COMPLEX WITH FMN; DIHYDROOROTATE AND INHIBITORS</scope>
    <scope>COFACTOR</scope>
</reference>
<reference key="11">
    <citation type="journal article" date="2006" name="J. Med. Chem.">
        <title>Dual binding mode of a novel series of DHODH inhibitors.</title>
        <authorList>
            <person name="Baumgartner R."/>
            <person name="Walloschek M."/>
            <person name="Kralik M."/>
            <person name="Gotschlich A."/>
            <person name="Tasler S."/>
            <person name="Mies J."/>
            <person name="Leban J."/>
        </authorList>
    </citation>
    <scope>X-RAY CRYSTALLOGRAPHY (2.0 ANGSTROMS) OF 29-395 IN COMPLEX WITH FMN AND INHIBITORS</scope>
</reference>
<reference key="12">
    <citation type="journal article" date="2010" name="Nat. Genet.">
        <title>Exome sequencing identifies the cause of a Mendelian disorder.</title>
        <authorList>
            <person name="Ng S.B."/>
            <person name="Buckingham K.J."/>
            <person name="Lee C."/>
            <person name="Bigham A.W."/>
            <person name="Tabor H.K."/>
            <person name="Dent K.M."/>
            <person name="Huff C.D."/>
            <person name="Shannon P.T."/>
            <person name="Jabs E.W."/>
            <person name="Nickerson D.A."/>
            <person name="Shendure J."/>
            <person name="Bamshad M.J."/>
        </authorList>
    </citation>
    <scope>VARIANTS POADS GLU-19; CYS-135; ARG-152; CYS-199; ALA-202; ASP-202; TRP-244; ILE-284; TRP-346 AND GLY-392</scope>
</reference>
<organism>
    <name type="scientific">Homo sapiens</name>
    <name type="common">Human</name>
    <dbReference type="NCBI Taxonomy" id="9606"/>
    <lineage>
        <taxon>Eukaryota</taxon>
        <taxon>Metazoa</taxon>
        <taxon>Chordata</taxon>
        <taxon>Craniata</taxon>
        <taxon>Vertebrata</taxon>
        <taxon>Euteleostomi</taxon>
        <taxon>Mammalia</taxon>
        <taxon>Eutheria</taxon>
        <taxon>Euarchontoglires</taxon>
        <taxon>Primates</taxon>
        <taxon>Haplorrhini</taxon>
        <taxon>Catarrhini</taxon>
        <taxon>Hominidae</taxon>
        <taxon>Homo</taxon>
    </lineage>
</organism>
<gene>
    <name type="primary">DHODH</name>
</gene>
<evidence type="ECO:0000250" key="1"/>
<evidence type="ECO:0000269" key="2">
    <source>
    </source>
</evidence>
<evidence type="ECO:0000269" key="3">
    <source>
    </source>
</evidence>
<evidence type="ECO:0000269" key="4">
    <source>
    </source>
</evidence>
<evidence type="ECO:0000269" key="5">
    <source>
    </source>
</evidence>
<evidence type="ECO:0000269" key="6">
    <source>
    </source>
</evidence>
<evidence type="ECO:0000269" key="7">
    <source>
    </source>
</evidence>
<evidence type="ECO:0000269" key="8">
    <source>
    </source>
</evidence>
<evidence type="ECO:0000305" key="9"/>
<evidence type="ECO:0000305" key="10">
    <source>
    </source>
</evidence>
<evidence type="ECO:0007829" key="11">
    <source>
        <dbReference type="PDB" id="4OQV"/>
    </source>
</evidence>
<evidence type="ECO:0007829" key="12">
    <source>
        <dbReference type="PDB" id="5K9C"/>
    </source>
</evidence>
<evidence type="ECO:0007829" key="13">
    <source>
        <dbReference type="PDB" id="6OC0"/>
    </source>
</evidence>
<evidence type="ECO:0007829" key="14">
    <source>
        <dbReference type="PDB" id="6OC1"/>
    </source>
</evidence>
<evidence type="ECO:0007829" key="15">
    <source>
        <dbReference type="PDB" id="6QU7"/>
    </source>
</evidence>
<comment type="function">
    <text evidence="8">Catalyzes the conversion of dihydroorotate to orotate with quinone as electron acceptor. Required for UMP biosynthesis via de novo pathway.</text>
</comment>
<comment type="catalytic activity">
    <reaction evidence="8">
        <text>(S)-dihydroorotate + a quinone = orotate + a quinol</text>
        <dbReference type="Rhea" id="RHEA:30187"/>
        <dbReference type="ChEBI" id="CHEBI:24646"/>
        <dbReference type="ChEBI" id="CHEBI:30839"/>
        <dbReference type="ChEBI" id="CHEBI:30864"/>
        <dbReference type="ChEBI" id="CHEBI:132124"/>
        <dbReference type="EC" id="1.3.5.2"/>
    </reaction>
</comment>
<comment type="cofactor">
    <cofactor evidence="2">
        <name>FMN</name>
        <dbReference type="ChEBI" id="CHEBI:58210"/>
    </cofactor>
    <text evidence="2">Binds 1 FMN per subunit.</text>
</comment>
<comment type="pathway">
    <text>Pyrimidine metabolism; UMP biosynthesis via de novo pathway; orotate from (S)-dihydroorotate (quinone route): step 1/1.</text>
</comment>
<comment type="subunit">
    <text evidence="2 6">Monomer.</text>
</comment>
<comment type="interaction">
    <interactant intactId="EBI-3928775">
        <id>Q02127</id>
    </interactant>
    <interactant intactId="EBI-2466594">
        <id>Q6ZMZ0</id>
        <label>RNF19B</label>
    </interactant>
    <organismsDiffer>false</organismsDiffer>
    <experiments>3</experiments>
</comment>
<comment type="interaction">
    <interactant intactId="EBI-3928775">
        <id>Q02127</id>
    </interactant>
    <interactant intactId="EBI-10210710">
        <id>P49638</id>
        <label>TTPA</label>
    </interactant>
    <organismsDiffer>false</organismsDiffer>
    <experiments>3</experiments>
</comment>
<comment type="subcellular location">
    <subcellularLocation>
        <location evidence="3">Mitochondrion inner membrane</location>
        <topology evidence="3">Single-pass membrane protein</topology>
    </subcellularLocation>
</comment>
<comment type="PTM">
    <text>The uncleaved transit peptide is required for mitochondrial targeting and proper membrane integration.</text>
</comment>
<comment type="disease" evidence="7">
    <disease id="DI-02571">
        <name>Postaxial acrofacial dysostosis</name>
        <acronym>POADS</acronym>
        <description>An autosomal recessive syndrome characterized by severe micrognathia, cleft lip and/or palate, hypoplasia or aplasia of the posterior elements of the limbs, coloboma of the eyelids and supernumerary nipples.</description>
        <dbReference type="MIM" id="263750"/>
    </disease>
    <text>The disease is caused by variants affecting the gene represented in this entry.</text>
</comment>
<comment type="miscellaneous">
    <text evidence="10">The identification of DHODH defects as the cause of postaxial acrofacial dysostosis (POADS) was obtained via exome sequencing (PubMed:19915526), demonstrating that this method is a powerful tool for identifying genes underlying rare Mendelian disorders. Exome sequencing consists of targeted resequencing of all protein-coding subsequences, which requires around 5% as much sequencing as a whole human genome.</text>
</comment>
<comment type="similarity">
    <text evidence="9">Belongs to the dihydroorotate dehydrogenase family. Type 2 subfamily.</text>
</comment>
<accession>Q02127</accession>
<accession>A8K8C8</accession>
<accession>Q6P176</accession>
<name>PYRD_HUMAN</name>
<keyword id="KW-0002">3D-structure</keyword>
<keyword id="KW-0225">Disease variant</keyword>
<keyword id="KW-0285">Flavoprotein</keyword>
<keyword id="KW-0288">FMN</keyword>
<keyword id="KW-0472">Membrane</keyword>
<keyword id="KW-0496">Mitochondrion</keyword>
<keyword id="KW-0999">Mitochondrion inner membrane</keyword>
<keyword id="KW-0560">Oxidoreductase</keyword>
<keyword id="KW-1267">Proteomics identification</keyword>
<keyword id="KW-0665">Pyrimidine biosynthesis</keyword>
<keyword id="KW-1185">Reference proteome</keyword>
<keyword id="KW-0809">Transit peptide</keyword>
<keyword id="KW-0812">Transmembrane</keyword>
<keyword id="KW-1133">Transmembrane helix</keyword>
<feature type="chain" id="PRO_0000029884" description="Dihydroorotate dehydrogenase (quinone), mitochondrial">
    <location>
        <begin position="1"/>
        <end position="395"/>
    </location>
</feature>
<feature type="transit peptide" description="Mitochondrion; not cleaved" evidence="1">
    <location>
        <begin position="1"/>
        <end position="10"/>
    </location>
</feature>
<feature type="topological domain" description="Mitochondrial matrix" evidence="1">
    <location>
        <begin position="1"/>
        <end position="10"/>
    </location>
</feature>
<feature type="transmembrane region" description="Helical" evidence="1">
    <location>
        <begin position="11"/>
        <end position="30"/>
    </location>
</feature>
<feature type="topological domain" description="Mitochondrial intermembrane" evidence="1">
    <location>
        <begin position="31"/>
        <end position="395"/>
    </location>
</feature>
<feature type="active site" description="Nucleophile">
    <location>
        <position position="214"/>
    </location>
</feature>
<feature type="binding site" evidence="2 6">
    <location>
        <begin position="95"/>
        <end position="99"/>
    </location>
    <ligand>
        <name>FMN</name>
        <dbReference type="ChEBI" id="CHEBI:58210"/>
    </ligand>
</feature>
<feature type="binding site">
    <location>
        <position position="99"/>
    </location>
    <ligand>
        <name>substrate</name>
    </ligand>
</feature>
<feature type="binding site" evidence="2 6">
    <location>
        <position position="119"/>
    </location>
    <ligand>
        <name>FMN</name>
        <dbReference type="ChEBI" id="CHEBI:58210"/>
    </ligand>
</feature>
<feature type="binding site">
    <location>
        <begin position="144"/>
        <end position="148"/>
    </location>
    <ligand>
        <name>substrate</name>
    </ligand>
</feature>
<feature type="binding site" evidence="2 6">
    <location>
        <position position="180"/>
    </location>
    <ligand>
        <name>FMN</name>
        <dbReference type="ChEBI" id="CHEBI:58210"/>
    </ligand>
</feature>
<feature type="binding site">
    <location>
        <begin position="211"/>
        <end position="216"/>
    </location>
    <ligand>
        <name>substrate</name>
    </ligand>
</feature>
<feature type="binding site" evidence="2 6">
    <location>
        <position position="211"/>
    </location>
    <ligand>
        <name>FMN</name>
        <dbReference type="ChEBI" id="CHEBI:58210"/>
    </ligand>
</feature>
<feature type="binding site" evidence="2 6">
    <location>
        <position position="254"/>
    </location>
    <ligand>
        <name>FMN</name>
        <dbReference type="ChEBI" id="CHEBI:58210"/>
    </ligand>
</feature>
<feature type="binding site" evidence="2 6">
    <location>
        <position position="282"/>
    </location>
    <ligand>
        <name>FMN</name>
        <dbReference type="ChEBI" id="CHEBI:58210"/>
    </ligand>
</feature>
<feature type="binding site">
    <location>
        <begin position="283"/>
        <end position="284"/>
    </location>
    <ligand>
        <name>substrate</name>
    </ligand>
</feature>
<feature type="binding site" evidence="2 6">
    <location>
        <position position="305"/>
    </location>
    <ligand>
        <name>FMN</name>
        <dbReference type="ChEBI" id="CHEBI:58210"/>
    </ligand>
</feature>
<feature type="binding site" evidence="2 6">
    <location>
        <position position="334"/>
    </location>
    <ligand>
        <name>FMN</name>
        <dbReference type="ChEBI" id="CHEBI:58210"/>
    </ligand>
</feature>
<feature type="binding site" evidence="2 6">
    <location>
        <begin position="355"/>
        <end position="356"/>
    </location>
    <ligand>
        <name>FMN</name>
        <dbReference type="ChEBI" id="CHEBI:58210"/>
    </ligand>
</feature>
<feature type="sequence variant" id="VAR_022094" description="In dbSNP:rs3213422." evidence="4 5">
    <original>K</original>
    <variation>Q</variation>
    <location>
        <position position="7"/>
    </location>
</feature>
<feature type="sequence variant" id="VAR_062412" description="In POADS; dbSNP:rs267606765." evidence="7">
    <original>G</original>
    <variation>E</variation>
    <location>
        <position position="19"/>
    </location>
</feature>
<feature type="sequence variant" id="VAR_062413" description="In POADS; dbSNP:rs201230446." evidence="7">
    <original>R</original>
    <variation>C</variation>
    <location>
        <position position="135"/>
    </location>
</feature>
<feature type="sequence variant" id="VAR_062414" description="In POADS; dbSNP:rs267606766." evidence="7">
    <original>G</original>
    <variation>R</variation>
    <location>
        <position position="152"/>
    </location>
</feature>
<feature type="sequence variant" id="VAR_062415" description="In POADS; dbSNP:rs267606769." evidence="7">
    <original>R</original>
    <variation>C</variation>
    <location>
        <position position="199"/>
    </location>
</feature>
<feature type="sequence variant" id="VAR_062416" description="In POADS; dbSNP:rs267606767." evidence="7">
    <original>G</original>
    <variation>A</variation>
    <location>
        <position position="202"/>
    </location>
</feature>
<feature type="sequence variant" id="VAR_062417" description="In POADS; dbSNP:rs267606767." evidence="7">
    <original>G</original>
    <variation>D</variation>
    <location>
        <position position="202"/>
    </location>
</feature>
<feature type="sequence variant" id="VAR_062418" description="In POADS; dbSNP:rs267606768." evidence="7">
    <original>R</original>
    <variation>W</variation>
    <location>
        <position position="244"/>
    </location>
</feature>
<feature type="sequence variant" id="VAR_062419" description="In POADS." evidence="7">
    <original>T</original>
    <variation>I</variation>
    <location>
        <position position="284"/>
    </location>
</feature>
<feature type="sequence variant" id="VAR_062420" description="In POADS; dbSNP:rs201947120." evidence="7">
    <original>R</original>
    <variation>W</variation>
    <location>
        <position position="346"/>
    </location>
</feature>
<feature type="sequence variant" id="VAR_062421" description="In POADS; dbSNP:rs779076692." evidence="7">
    <original>D</original>
    <variation>G</variation>
    <location>
        <position position="392"/>
    </location>
</feature>
<feature type="sequence conflict" description="In Ref. 1; AAA50163." evidence="9" ref="1">
    <original>MA</original>
    <variation>KLP</variation>
    <location>
        <begin position="1"/>
        <end position="2"/>
    </location>
</feature>
<feature type="helix" evidence="11">
    <location>
        <begin position="34"/>
        <end position="39"/>
    </location>
</feature>
<feature type="helix" evidence="11">
    <location>
        <begin position="41"/>
        <end position="48"/>
    </location>
</feature>
<feature type="helix" evidence="11">
    <location>
        <begin position="51"/>
        <end position="63"/>
    </location>
</feature>
<feature type="helix" evidence="11">
    <location>
        <begin position="76"/>
        <end position="78"/>
    </location>
</feature>
<feature type="strand" evidence="11">
    <location>
        <begin position="80"/>
        <end position="82"/>
    </location>
</feature>
<feature type="strand" evidence="11">
    <location>
        <begin position="85"/>
        <end position="93"/>
    </location>
</feature>
<feature type="turn" evidence="13">
    <location>
        <begin position="95"/>
        <end position="100"/>
    </location>
</feature>
<feature type="strand" evidence="13">
    <location>
        <begin position="101"/>
        <end position="103"/>
    </location>
</feature>
<feature type="helix" evidence="11">
    <location>
        <begin position="104"/>
        <end position="109"/>
    </location>
</feature>
<feature type="strand" evidence="11">
    <location>
        <begin position="113"/>
        <end position="120"/>
    </location>
</feature>
<feature type="strand" evidence="11">
    <location>
        <begin position="133"/>
        <end position="136"/>
    </location>
</feature>
<feature type="helix" evidence="11">
    <location>
        <begin position="137"/>
        <end position="139"/>
    </location>
</feature>
<feature type="strand" evidence="11">
    <location>
        <begin position="141"/>
        <end position="144"/>
    </location>
</feature>
<feature type="helix" evidence="11">
    <location>
        <begin position="153"/>
        <end position="161"/>
    </location>
</feature>
<feature type="helix" evidence="11">
    <location>
        <begin position="164"/>
        <end position="172"/>
    </location>
</feature>
<feature type="strand" evidence="11">
    <location>
        <begin position="177"/>
        <end position="181"/>
    </location>
</feature>
<feature type="helix" evidence="11">
    <location>
        <begin position="190"/>
        <end position="201"/>
    </location>
</feature>
<feature type="helix" evidence="11">
    <location>
        <begin position="202"/>
        <end position="204"/>
    </location>
</feature>
<feature type="strand" evidence="11">
    <location>
        <begin position="206"/>
        <end position="212"/>
    </location>
</feature>
<feature type="strand" evidence="14">
    <location>
        <begin position="215"/>
        <end position="217"/>
    </location>
</feature>
<feature type="turn" evidence="15">
    <location>
        <begin position="218"/>
        <end position="221"/>
    </location>
</feature>
<feature type="helix" evidence="11">
    <location>
        <begin position="226"/>
        <end position="241"/>
    </location>
</feature>
<feature type="helix" evidence="11">
    <location>
        <begin position="245"/>
        <end position="247"/>
    </location>
</feature>
<feature type="strand" evidence="11">
    <location>
        <begin position="250"/>
        <end position="255"/>
    </location>
</feature>
<feature type="helix" evidence="11">
    <location>
        <begin position="261"/>
        <end position="274"/>
    </location>
</feature>
<feature type="strand" evidence="11">
    <location>
        <begin position="278"/>
        <end position="281"/>
    </location>
</feature>
<feature type="strand" evidence="12">
    <location>
        <begin position="285"/>
        <end position="287"/>
    </location>
</feature>
<feature type="turn" evidence="11">
    <location>
        <begin position="295"/>
        <end position="298"/>
    </location>
</feature>
<feature type="strand" evidence="11">
    <location>
        <begin position="299"/>
        <end position="305"/>
    </location>
</feature>
<feature type="helix" evidence="11">
    <location>
        <begin position="306"/>
        <end position="308"/>
    </location>
</feature>
<feature type="helix" evidence="11">
    <location>
        <begin position="309"/>
        <end position="322"/>
    </location>
</feature>
<feature type="turn" evidence="11">
    <location>
        <begin position="323"/>
        <end position="325"/>
    </location>
</feature>
<feature type="strand" evidence="11">
    <location>
        <begin position="329"/>
        <end position="334"/>
    </location>
</feature>
<feature type="helix" evidence="11">
    <location>
        <begin position="338"/>
        <end position="347"/>
    </location>
</feature>
<feature type="strand" evidence="11">
    <location>
        <begin position="349"/>
        <end position="355"/>
    </location>
</feature>
<feature type="helix" evidence="11">
    <location>
        <begin position="356"/>
        <end position="361"/>
    </location>
</feature>
<feature type="helix" evidence="11">
    <location>
        <begin position="364"/>
        <end position="379"/>
    </location>
</feature>
<feature type="helix" evidence="11">
    <location>
        <begin position="385"/>
        <end position="388"/>
    </location>
</feature>
<feature type="helix" evidence="11">
    <location>
        <begin position="391"/>
        <end position="393"/>
    </location>
</feature>
<protein>
    <recommendedName>
        <fullName>Dihydroorotate dehydrogenase (quinone), mitochondrial</fullName>
        <shortName>DHOdehase</shortName>
        <ecNumber evidence="8">1.3.5.2</ecNumber>
    </recommendedName>
    <alternativeName>
        <fullName>Dihydroorotate oxidase</fullName>
    </alternativeName>
</protein>
<dbReference type="EC" id="1.3.5.2" evidence="8"/>
<dbReference type="EMBL" id="M94065">
    <property type="protein sequence ID" value="AAA50163.1"/>
    <property type="molecule type" value="mRNA"/>
</dbReference>
<dbReference type="EMBL" id="AK292293">
    <property type="protein sequence ID" value="BAF84982.1"/>
    <property type="molecule type" value="mRNA"/>
</dbReference>
<dbReference type="EMBL" id="BC065245">
    <property type="protein sequence ID" value="AAH65245.1"/>
    <property type="molecule type" value="mRNA"/>
</dbReference>
<dbReference type="CCDS" id="CCDS42192.1"/>
<dbReference type="PIR" id="PC1219">
    <property type="entry name" value="PC1219"/>
</dbReference>
<dbReference type="RefSeq" id="NP_001352.2">
    <property type="nucleotide sequence ID" value="NM_001361.4"/>
</dbReference>
<dbReference type="PDB" id="1D3G">
    <property type="method" value="X-ray"/>
    <property type="resolution" value="1.60 A"/>
    <property type="chains" value="A=29-395"/>
</dbReference>
<dbReference type="PDB" id="1D3H">
    <property type="method" value="X-ray"/>
    <property type="resolution" value="1.80 A"/>
    <property type="chains" value="A=29-395"/>
</dbReference>
<dbReference type="PDB" id="2B0M">
    <property type="method" value="X-ray"/>
    <property type="resolution" value="2.00 A"/>
    <property type="chains" value="A=29-395"/>
</dbReference>
<dbReference type="PDB" id="2BXV">
    <property type="method" value="X-ray"/>
    <property type="resolution" value="2.15 A"/>
    <property type="chains" value="A=29-395"/>
</dbReference>
<dbReference type="PDB" id="2FPT">
    <property type="method" value="X-ray"/>
    <property type="resolution" value="2.40 A"/>
    <property type="chains" value="A=29-395"/>
</dbReference>
<dbReference type="PDB" id="2FPV">
    <property type="method" value="X-ray"/>
    <property type="resolution" value="1.80 A"/>
    <property type="chains" value="A=29-395"/>
</dbReference>
<dbReference type="PDB" id="2FPY">
    <property type="method" value="X-ray"/>
    <property type="resolution" value="2.00 A"/>
    <property type="chains" value="A=29-395"/>
</dbReference>
<dbReference type="PDB" id="2FQI">
    <property type="method" value="X-ray"/>
    <property type="resolution" value="1.95 A"/>
    <property type="chains" value="A=29-395"/>
</dbReference>
<dbReference type="PDB" id="2PRH">
    <property type="method" value="X-ray"/>
    <property type="resolution" value="2.40 A"/>
    <property type="chains" value="A=29-395"/>
</dbReference>
<dbReference type="PDB" id="2PRL">
    <property type="method" value="X-ray"/>
    <property type="resolution" value="2.10 A"/>
    <property type="chains" value="A=29-395"/>
</dbReference>
<dbReference type="PDB" id="2PRM">
    <property type="method" value="X-ray"/>
    <property type="resolution" value="3.00 A"/>
    <property type="chains" value="A=29-395"/>
</dbReference>
<dbReference type="PDB" id="2WV8">
    <property type="method" value="X-ray"/>
    <property type="resolution" value="1.90 A"/>
    <property type="chains" value="A=31-395"/>
</dbReference>
<dbReference type="PDB" id="3F1Q">
    <property type="method" value="X-ray"/>
    <property type="resolution" value="2.00 A"/>
    <property type="chains" value="A=29-395"/>
</dbReference>
<dbReference type="PDB" id="3FJ6">
    <property type="method" value="X-ray"/>
    <property type="resolution" value="1.80 A"/>
    <property type="chains" value="A=29-395"/>
</dbReference>
<dbReference type="PDB" id="3FJL">
    <property type="method" value="X-ray"/>
    <property type="resolution" value="1.90 A"/>
    <property type="chains" value="A=29-395"/>
</dbReference>
<dbReference type="PDB" id="3G0U">
    <property type="method" value="X-ray"/>
    <property type="resolution" value="2.00 A"/>
    <property type="chains" value="A=29-395"/>
</dbReference>
<dbReference type="PDB" id="3G0X">
    <property type="method" value="X-ray"/>
    <property type="resolution" value="1.80 A"/>
    <property type="chains" value="A=29-395"/>
</dbReference>
<dbReference type="PDB" id="3KVJ">
    <property type="method" value="X-ray"/>
    <property type="resolution" value="1.94 A"/>
    <property type="chains" value="A=29-395"/>
</dbReference>
<dbReference type="PDB" id="3KVK">
    <property type="method" value="X-ray"/>
    <property type="resolution" value="2.05 A"/>
    <property type="chains" value="A=29-395"/>
</dbReference>
<dbReference type="PDB" id="3KVL">
    <property type="method" value="X-ray"/>
    <property type="resolution" value="1.85 A"/>
    <property type="chains" value="A=29-395"/>
</dbReference>
<dbReference type="PDB" id="3KVM">
    <property type="method" value="X-ray"/>
    <property type="resolution" value="2.00 A"/>
    <property type="chains" value="A=29-395"/>
</dbReference>
<dbReference type="PDB" id="3U2O">
    <property type="method" value="X-ray"/>
    <property type="resolution" value="2.18 A"/>
    <property type="chains" value="A=1-395"/>
</dbReference>
<dbReference type="PDB" id="3W7R">
    <property type="method" value="X-ray"/>
    <property type="resolution" value="1.68 A"/>
    <property type="chains" value="A=29-395"/>
</dbReference>
<dbReference type="PDB" id="3ZWS">
    <property type="method" value="X-ray"/>
    <property type="resolution" value="1.60 A"/>
    <property type="chains" value="A=29-395"/>
</dbReference>
<dbReference type="PDB" id="3ZWT">
    <property type="method" value="X-ray"/>
    <property type="resolution" value="1.55 A"/>
    <property type="chains" value="A=29-395"/>
</dbReference>
<dbReference type="PDB" id="4IGH">
    <property type="method" value="X-ray"/>
    <property type="resolution" value="1.30 A"/>
    <property type="chains" value="A=32-395"/>
</dbReference>
<dbReference type="PDB" id="4JGD">
    <property type="method" value="X-ray"/>
    <property type="resolution" value="2.05 A"/>
    <property type="chains" value="A=29-395"/>
</dbReference>
<dbReference type="PDB" id="4JS3">
    <property type="method" value="X-ray"/>
    <property type="resolution" value="2.00 A"/>
    <property type="chains" value="A=29-395"/>
</dbReference>
<dbReference type="PDB" id="4JTS">
    <property type="method" value="X-ray"/>
    <property type="resolution" value="2.21 A"/>
    <property type="chains" value="A=29-395"/>
</dbReference>
<dbReference type="PDB" id="4JTT">
    <property type="method" value="X-ray"/>
    <property type="resolution" value="2.10 A"/>
    <property type="chains" value="A=29-395"/>
</dbReference>
<dbReference type="PDB" id="4JTU">
    <property type="method" value="X-ray"/>
    <property type="resolution" value="1.90 A"/>
    <property type="chains" value="A=29-395"/>
</dbReference>
<dbReference type="PDB" id="4LS0">
    <property type="method" value="X-ray"/>
    <property type="resolution" value="2.07 A"/>
    <property type="chains" value="A=29-395"/>
</dbReference>
<dbReference type="PDB" id="4LS1">
    <property type="method" value="X-ray"/>
    <property type="resolution" value="2.20 A"/>
    <property type="chains" value="A=29-395"/>
</dbReference>
<dbReference type="PDB" id="4LS2">
    <property type="method" value="X-ray"/>
    <property type="resolution" value="2.27 A"/>
    <property type="chains" value="A=29-395"/>
</dbReference>
<dbReference type="PDB" id="4OQV">
    <property type="method" value="X-ray"/>
    <property type="resolution" value="1.23 A"/>
    <property type="chains" value="A=32-395"/>
</dbReference>
<dbReference type="PDB" id="4RK8">
    <property type="method" value="X-ray"/>
    <property type="resolution" value="2.22 A"/>
    <property type="chains" value="A=29-395"/>
</dbReference>
<dbReference type="PDB" id="4RKA">
    <property type="method" value="X-ray"/>
    <property type="resolution" value="2.71 A"/>
    <property type="chains" value="A=29-395"/>
</dbReference>
<dbReference type="PDB" id="4RLI">
    <property type="method" value="X-ray"/>
    <property type="resolution" value="2.50 A"/>
    <property type="chains" value="A=29-395"/>
</dbReference>
<dbReference type="PDB" id="4RR4">
    <property type="method" value="X-ray"/>
    <property type="resolution" value="2.38 A"/>
    <property type="chains" value="A=29-395"/>
</dbReference>
<dbReference type="PDB" id="4YLW">
    <property type="method" value="X-ray"/>
    <property type="resolution" value="1.79 A"/>
    <property type="chains" value="A=29-395"/>
</dbReference>
<dbReference type="PDB" id="4ZL1">
    <property type="method" value="X-ray"/>
    <property type="resolution" value="1.86 A"/>
    <property type="chains" value="A=29-395"/>
</dbReference>
<dbReference type="PDB" id="4ZMG">
    <property type="method" value="X-ray"/>
    <property type="resolution" value="1.90 A"/>
    <property type="chains" value="A=29-395"/>
</dbReference>
<dbReference type="PDB" id="5H2Z">
    <property type="method" value="X-ray"/>
    <property type="resolution" value="1.58 A"/>
    <property type="chains" value="A=29-395"/>
</dbReference>
<dbReference type="PDB" id="5H73">
    <property type="method" value="X-ray"/>
    <property type="resolution" value="1.58 A"/>
    <property type="chains" value="A=29-395"/>
</dbReference>
<dbReference type="PDB" id="5HIN">
    <property type="method" value="X-ray"/>
    <property type="resolution" value="1.60 A"/>
    <property type="chains" value="A=29-395"/>
</dbReference>
<dbReference type="PDB" id="5HQE">
    <property type="method" value="X-ray"/>
    <property type="resolution" value="1.62 A"/>
    <property type="chains" value="A=29-395"/>
</dbReference>
<dbReference type="PDB" id="5K9C">
    <property type="method" value="X-ray"/>
    <property type="resolution" value="1.66 A"/>
    <property type="chains" value="A=29-395"/>
</dbReference>
<dbReference type="PDB" id="5K9D">
    <property type="method" value="X-ray"/>
    <property type="resolution" value="1.70 A"/>
    <property type="chains" value="A=29-395"/>
</dbReference>
<dbReference type="PDB" id="5MUT">
    <property type="method" value="X-ray"/>
    <property type="resolution" value="1.75 A"/>
    <property type="chains" value="A=31-395"/>
</dbReference>
<dbReference type="PDB" id="5MVC">
    <property type="method" value="X-ray"/>
    <property type="resolution" value="1.85 A"/>
    <property type="chains" value="A=29-395"/>
</dbReference>
<dbReference type="PDB" id="5MVD">
    <property type="method" value="X-ray"/>
    <property type="resolution" value="1.95 A"/>
    <property type="chains" value="A=33-395"/>
</dbReference>
<dbReference type="PDB" id="5TCE">
    <property type="method" value="NMR"/>
    <property type="chains" value="A=32-65"/>
</dbReference>
<dbReference type="PDB" id="5ZF4">
    <property type="method" value="X-ray"/>
    <property type="resolution" value="1.66 A"/>
    <property type="chains" value="A=29-395"/>
</dbReference>
<dbReference type="PDB" id="5ZF7">
    <property type="method" value="X-ray"/>
    <property type="resolution" value="1.79 A"/>
    <property type="chains" value="A=29-395"/>
</dbReference>
<dbReference type="PDB" id="5ZF8">
    <property type="method" value="X-ray"/>
    <property type="resolution" value="1.70 A"/>
    <property type="chains" value="A=29-395"/>
</dbReference>
<dbReference type="PDB" id="5ZF9">
    <property type="method" value="X-ray"/>
    <property type="resolution" value="1.77 A"/>
    <property type="chains" value="A=29-395"/>
</dbReference>
<dbReference type="PDB" id="5ZFA">
    <property type="method" value="X-ray"/>
    <property type="resolution" value="1.75 A"/>
    <property type="chains" value="A=29-395"/>
</dbReference>
<dbReference type="PDB" id="5ZFB">
    <property type="method" value="X-ray"/>
    <property type="resolution" value="2.00 A"/>
    <property type="chains" value="A=29-395"/>
</dbReference>
<dbReference type="PDB" id="6CJF">
    <property type="method" value="X-ray"/>
    <property type="resolution" value="1.63 A"/>
    <property type="chains" value="A/B=32-395"/>
</dbReference>
<dbReference type="PDB" id="6CJG">
    <property type="method" value="X-ray"/>
    <property type="resolution" value="2.85 A"/>
    <property type="chains" value="A=32-395"/>
</dbReference>
<dbReference type="PDB" id="6ET4">
    <property type="method" value="X-ray"/>
    <property type="resolution" value="1.70 A"/>
    <property type="chains" value="A=29-395"/>
</dbReference>
<dbReference type="PDB" id="6FMD">
    <property type="method" value="X-ray"/>
    <property type="resolution" value="1.58 A"/>
    <property type="chains" value="A=1-395"/>
</dbReference>
<dbReference type="PDB" id="6GK0">
    <property type="method" value="X-ray"/>
    <property type="resolution" value="1.85 A"/>
    <property type="chains" value="A=29-395"/>
</dbReference>
<dbReference type="PDB" id="6IDJ">
    <property type="method" value="X-ray"/>
    <property type="resolution" value="1.90 A"/>
    <property type="chains" value="A=29-395"/>
</dbReference>
<dbReference type="PDB" id="6J3B">
    <property type="method" value="X-ray"/>
    <property type="resolution" value="1.60 A"/>
    <property type="chains" value="A=30-395"/>
</dbReference>
<dbReference type="PDB" id="6J3C">
    <property type="method" value="X-ray"/>
    <property type="resolution" value="1.85 A"/>
    <property type="chains" value="A=30-395"/>
</dbReference>
<dbReference type="PDB" id="6JMD">
    <property type="method" value="X-ray"/>
    <property type="resolution" value="1.78 A"/>
    <property type="chains" value="A=30-395"/>
</dbReference>
<dbReference type="PDB" id="6JME">
    <property type="method" value="X-ray"/>
    <property type="resolution" value="1.80 A"/>
    <property type="chains" value="A=30-395"/>
</dbReference>
<dbReference type="PDB" id="6LP6">
    <property type="method" value="X-ray"/>
    <property type="resolution" value="1.79 A"/>
    <property type="chains" value="A=30-395"/>
</dbReference>
<dbReference type="PDB" id="6LP7">
    <property type="method" value="X-ray"/>
    <property type="resolution" value="1.80 A"/>
    <property type="chains" value="A=30-395"/>
</dbReference>
<dbReference type="PDB" id="6LP8">
    <property type="method" value="X-ray"/>
    <property type="resolution" value="1.79 A"/>
    <property type="chains" value="A=30-395"/>
</dbReference>
<dbReference type="PDB" id="6LZL">
    <property type="method" value="X-ray"/>
    <property type="resolution" value="1.98 A"/>
    <property type="chains" value="A=31-395"/>
</dbReference>
<dbReference type="PDB" id="6M2B">
    <property type="method" value="X-ray"/>
    <property type="resolution" value="1.76 A"/>
    <property type="chains" value="A=29-395"/>
</dbReference>
<dbReference type="PDB" id="6OC0">
    <property type="method" value="X-ray"/>
    <property type="resolution" value="1.40 A"/>
    <property type="chains" value="A=29-395"/>
</dbReference>
<dbReference type="PDB" id="6OC1">
    <property type="method" value="X-ray"/>
    <property type="resolution" value="2.70 A"/>
    <property type="chains" value="A=29-395"/>
</dbReference>
<dbReference type="PDB" id="6QU7">
    <property type="method" value="X-ray"/>
    <property type="resolution" value="1.52 A"/>
    <property type="chains" value="A=30-395"/>
</dbReference>
<dbReference type="PDB" id="6SYP">
    <property type="method" value="X-ray"/>
    <property type="resolution" value="1.80 A"/>
    <property type="chains" value="AAA=1-395"/>
</dbReference>
<dbReference type="PDB" id="6VND">
    <property type="method" value="X-ray"/>
    <property type="resolution" value="1.97 A"/>
    <property type="chains" value="A=29-395"/>
</dbReference>
<dbReference type="PDB" id="7K2U">
    <property type="method" value="X-ray"/>
    <property type="resolution" value="1.73 A"/>
    <property type="chains" value="A=29-395"/>
</dbReference>
<dbReference type="PDB" id="7Z6C">
    <property type="method" value="X-ray"/>
    <property type="resolution" value="1.85 A"/>
    <property type="chains" value="A=30-395"/>
</dbReference>
<dbReference type="PDB" id="8DHF">
    <property type="method" value="X-ray"/>
    <property type="resolution" value="1.78 A"/>
    <property type="chains" value="A=29-395"/>
</dbReference>
<dbReference type="PDB" id="8DHG">
    <property type="method" value="X-ray"/>
    <property type="resolution" value="1.85 A"/>
    <property type="chains" value="A=29-395"/>
</dbReference>
<dbReference type="PDB" id="8DHH">
    <property type="method" value="X-ray"/>
    <property type="resolution" value="2.02 A"/>
    <property type="chains" value="A=29-395"/>
</dbReference>
<dbReference type="PDB" id="8K4F">
    <property type="method" value="X-ray"/>
    <property type="resolution" value="2.48 A"/>
    <property type="chains" value="A=30-395"/>
</dbReference>
<dbReference type="PDB" id="8RAK">
    <property type="method" value="X-ray"/>
    <property type="resolution" value="1.85 A"/>
    <property type="chains" value="A=29-395"/>
</dbReference>
<dbReference type="PDB" id="8VHL">
    <property type="method" value="X-ray"/>
    <property type="resolution" value="1.93 A"/>
    <property type="chains" value="A=29-395"/>
</dbReference>
<dbReference type="PDB" id="8VHM">
    <property type="method" value="X-ray"/>
    <property type="resolution" value="2.26 A"/>
    <property type="chains" value="A=29-395"/>
</dbReference>
<dbReference type="PDB" id="8YHR">
    <property type="method" value="X-ray"/>
    <property type="resolution" value="1.70 A"/>
    <property type="chains" value="A=29-395"/>
</dbReference>
<dbReference type="PDB" id="9BKM">
    <property type="method" value="X-ray"/>
    <property type="resolution" value="2.08 A"/>
    <property type="chains" value="A=29-395"/>
</dbReference>
<dbReference type="PDB" id="9BKN">
    <property type="method" value="X-ray"/>
    <property type="resolution" value="1.30 A"/>
    <property type="chains" value="A=30-395"/>
</dbReference>
<dbReference type="PDB" id="9BKO">
    <property type="method" value="X-ray"/>
    <property type="resolution" value="1.44 A"/>
    <property type="chains" value="A=30-395"/>
</dbReference>
<dbReference type="PDB" id="9DHG">
    <property type="method" value="X-ray"/>
    <property type="resolution" value="1.39 A"/>
    <property type="chains" value="A=29-395"/>
</dbReference>
<dbReference type="PDB" id="9DHH">
    <property type="method" value="X-ray"/>
    <property type="resolution" value="1.49 A"/>
    <property type="chains" value="A=29-395"/>
</dbReference>
<dbReference type="PDB" id="9DHI">
    <property type="method" value="X-ray"/>
    <property type="resolution" value="1.38 A"/>
    <property type="chains" value="A=29-395"/>
</dbReference>
<dbReference type="PDB" id="9DHJ">
    <property type="method" value="X-ray"/>
    <property type="resolution" value="1.40 A"/>
    <property type="chains" value="A=29-395"/>
</dbReference>
<dbReference type="PDB" id="9I2Y">
    <property type="method" value="X-ray"/>
    <property type="resolution" value="1.95 A"/>
    <property type="chains" value="A=31-395"/>
</dbReference>
<dbReference type="PDBsum" id="1D3G"/>
<dbReference type="PDBsum" id="1D3H"/>
<dbReference type="PDBsum" id="2B0M"/>
<dbReference type="PDBsum" id="2BXV"/>
<dbReference type="PDBsum" id="2FPT"/>
<dbReference type="PDBsum" id="2FPV"/>
<dbReference type="PDBsum" id="2FPY"/>
<dbReference type="PDBsum" id="2FQI"/>
<dbReference type="PDBsum" id="2PRH"/>
<dbReference type="PDBsum" id="2PRL"/>
<dbReference type="PDBsum" id="2PRM"/>
<dbReference type="PDBsum" id="2WV8"/>
<dbReference type="PDBsum" id="3F1Q"/>
<dbReference type="PDBsum" id="3FJ6"/>
<dbReference type="PDBsum" id="3FJL"/>
<dbReference type="PDBsum" id="3G0U"/>
<dbReference type="PDBsum" id="3G0X"/>
<dbReference type="PDBsum" id="3KVJ"/>
<dbReference type="PDBsum" id="3KVK"/>
<dbReference type="PDBsum" id="3KVL"/>
<dbReference type="PDBsum" id="3KVM"/>
<dbReference type="PDBsum" id="3U2O"/>
<dbReference type="PDBsum" id="3W7R"/>
<dbReference type="PDBsum" id="3ZWS"/>
<dbReference type="PDBsum" id="3ZWT"/>
<dbReference type="PDBsum" id="4IGH"/>
<dbReference type="PDBsum" id="4JGD"/>
<dbReference type="PDBsum" id="4JS3"/>
<dbReference type="PDBsum" id="4JTS"/>
<dbReference type="PDBsum" id="4JTT"/>
<dbReference type="PDBsum" id="4JTU"/>
<dbReference type="PDBsum" id="4LS0"/>
<dbReference type="PDBsum" id="4LS1"/>
<dbReference type="PDBsum" id="4LS2"/>
<dbReference type="PDBsum" id="4OQV"/>
<dbReference type="PDBsum" id="4RK8"/>
<dbReference type="PDBsum" id="4RKA"/>
<dbReference type="PDBsum" id="4RLI"/>
<dbReference type="PDBsum" id="4RR4"/>
<dbReference type="PDBsum" id="4YLW"/>
<dbReference type="PDBsum" id="4ZL1"/>
<dbReference type="PDBsum" id="4ZMG"/>
<dbReference type="PDBsum" id="5H2Z"/>
<dbReference type="PDBsum" id="5H73"/>
<dbReference type="PDBsum" id="5HIN"/>
<dbReference type="PDBsum" id="5HQE"/>
<dbReference type="PDBsum" id="5K9C"/>
<dbReference type="PDBsum" id="5K9D"/>
<dbReference type="PDBsum" id="5MUT"/>
<dbReference type="PDBsum" id="5MVC"/>
<dbReference type="PDBsum" id="5MVD"/>
<dbReference type="PDBsum" id="5TCE"/>
<dbReference type="PDBsum" id="5ZF4"/>
<dbReference type="PDBsum" id="5ZF7"/>
<dbReference type="PDBsum" id="5ZF8"/>
<dbReference type="PDBsum" id="5ZF9"/>
<dbReference type="PDBsum" id="5ZFA"/>
<dbReference type="PDBsum" id="5ZFB"/>
<dbReference type="PDBsum" id="6CJF"/>
<dbReference type="PDBsum" id="6CJG"/>
<dbReference type="PDBsum" id="6ET4"/>
<dbReference type="PDBsum" id="6FMD"/>
<dbReference type="PDBsum" id="6GK0"/>
<dbReference type="PDBsum" id="6IDJ"/>
<dbReference type="PDBsum" id="6J3B"/>
<dbReference type="PDBsum" id="6J3C"/>
<dbReference type="PDBsum" id="6JMD"/>
<dbReference type="PDBsum" id="6JME"/>
<dbReference type="PDBsum" id="6LP6"/>
<dbReference type="PDBsum" id="6LP7"/>
<dbReference type="PDBsum" id="6LP8"/>
<dbReference type="PDBsum" id="6LZL"/>
<dbReference type="PDBsum" id="6M2B"/>
<dbReference type="PDBsum" id="6OC0"/>
<dbReference type="PDBsum" id="6OC1"/>
<dbReference type="PDBsum" id="6QU7"/>
<dbReference type="PDBsum" id="6SYP"/>
<dbReference type="PDBsum" id="6VND"/>
<dbReference type="PDBsum" id="7K2U"/>
<dbReference type="PDBsum" id="7Z6C"/>
<dbReference type="PDBsum" id="8DHF"/>
<dbReference type="PDBsum" id="8DHG"/>
<dbReference type="PDBsum" id="8DHH"/>
<dbReference type="PDBsum" id="8K4F"/>
<dbReference type="PDBsum" id="8RAK"/>
<dbReference type="PDBsum" id="8VHL"/>
<dbReference type="PDBsum" id="8VHM"/>
<dbReference type="PDBsum" id="8YHR"/>
<dbReference type="PDBsum" id="9BKM"/>
<dbReference type="PDBsum" id="9BKN"/>
<dbReference type="PDBsum" id="9BKO"/>
<dbReference type="PDBsum" id="9DHG"/>
<dbReference type="PDBsum" id="9DHH"/>
<dbReference type="PDBsum" id="9DHI"/>
<dbReference type="PDBsum" id="9DHJ"/>
<dbReference type="PDBsum" id="9I2Y"/>
<dbReference type="SMR" id="Q02127"/>
<dbReference type="BioGRID" id="108068">
    <property type="interactions" value="46"/>
</dbReference>
<dbReference type="FunCoup" id="Q02127">
    <property type="interactions" value="2176"/>
</dbReference>
<dbReference type="IntAct" id="Q02127">
    <property type="interactions" value="16"/>
</dbReference>
<dbReference type="STRING" id="9606.ENSP00000219240"/>
<dbReference type="BindingDB" id="Q02127"/>
<dbReference type="ChEMBL" id="CHEMBL1966"/>
<dbReference type="DrugBank" id="DB07559">
    <property type="generic name" value="(2Z)-2-cyano-N-(2,2'-dichlorobiphenyl-4-yl)-3-hydroxybut-2-enamide"/>
</dbReference>
<dbReference type="DrugBank" id="DB07561">
    <property type="generic name" value="(2Z)-2-cyano-N-(3'-ethoxybiphenyl-4-yl)-3-hydroxybut-2-enamide"/>
</dbReference>
<dbReference type="DrugBank" id="DB08172">
    <property type="generic name" value="(2Z)-N-(3-chloro-2'-methoxybiphenyl-4-yl)-2-cyano-3-hydroxybut-2-enamide"/>
</dbReference>
<dbReference type="DrugBank" id="DB08169">
    <property type="generic name" value="(2Z)-N-biphenyl-4-yl-2-cyano-3-cyclopropyl-3-hydroxyprop-2-enamide"/>
</dbReference>
<dbReference type="DrugBank" id="DB07443">
    <property type="generic name" value="(2Z)-N-biphenyl-4-yl-2-cyano-3-hydroxybut-2-enamide"/>
</dbReference>
<dbReference type="DrugBank" id="DB07978">
    <property type="generic name" value="2-({[2,3,5,6-TETRAFLUORO-3'-(TRIFLUOROMETHOXY)BIPHENYL-4-YL]AMINO}CARBONYL)CYCLOPENTA-1,3-DIENE-1-CARBOXYLIC ACID"/>
</dbReference>
<dbReference type="DrugBank" id="DB07975">
    <property type="generic name" value="2-({[3,5-DIFLUORO-3'-(TRIFLUOROMETHOXY)BIPHENYL-4-YL]AMINO}CARBONYL)CYCLOPENT-1-ENE-1-CARBOXYLIC ACID"/>
</dbReference>
<dbReference type="DrugBank" id="DB04281">
    <property type="generic name" value="2-[4-(4-Chlorophenyl)Cyclohexylidene]-3,4-Dihydroxy-1(2h)-Naphthalenone"/>
</dbReference>
<dbReference type="DrugBank" id="DB08249">
    <property type="generic name" value="3,6,9,12,15-PENTAOXATRICOSAN-1-OL"/>
</dbReference>
<dbReference type="DrugBank" id="DB07977">
    <property type="generic name" value="3-({[3,5-DIFLUORO-3'-(TRIFLUOROMETHOXY)BIPHENYL-4-YL]AMINO}CARBONYL)THIOPHENE-2-CARBOXYLIC ACID"/>
</dbReference>
<dbReference type="DrugBank" id="DB07976">
    <property type="generic name" value="3-{[(3-FLUORO-3'-METHOXYBIPHENYL-4-YL)AMINO]CARBONYL}THIOPHENE-2-CARBOXYLIC ACID"/>
</dbReference>
<dbReference type="DrugBank" id="DB04583">
    <property type="generic name" value="5-Carbamoyl-1,1':4',1''-terphenyl-3-carboxylic acid"/>
</dbReference>
<dbReference type="DrugBank" id="DB08008">
    <property type="generic name" value="5-methyl-N-[4-(trifluoromethyl)phenyl][1,2,4]triazolo[1,5-a]pyrimidin-7-amine"/>
</dbReference>
<dbReference type="DrugBank" id="DB01117">
    <property type="generic name" value="Atovaquone"/>
</dbReference>
<dbReference type="DrugBank" id="DB03523">
    <property type="generic name" value="Brequinar"/>
</dbReference>
<dbReference type="DrugBank" id="DB03480">
    <property type="generic name" value="Brequinar Analog"/>
</dbReference>
<dbReference type="DrugBank" id="DB02613">
    <property type="generic name" value="Capric dimethyl amine oxide"/>
</dbReference>
<dbReference type="DrugBank" id="DB04147">
    <property type="generic name" value="Dodecyldimethylamine N-oxide"/>
</dbReference>
<dbReference type="DrugBank" id="DB03247">
    <property type="generic name" value="Flavin mononucleotide"/>
</dbReference>
<dbReference type="DrugBank" id="DB01097">
    <property type="generic name" value="Leflunomide"/>
</dbReference>
<dbReference type="DrugBank" id="DB06481">
    <property type="generic name" value="Manitimus"/>
</dbReference>
<dbReference type="DrugBank" id="DB08006">
    <property type="generic name" value="N-anthracen-2-yl-5-methyl[1,2,4]triazolo[1,5-a]pyrimidin-7-amine"/>
</dbReference>
<dbReference type="DrugBank" id="DB02262">
    <property type="generic name" value="Orotic acid"/>
</dbReference>
<dbReference type="DrugBank" id="DB05125">
    <property type="generic name" value="SC12267"/>
</dbReference>
<dbReference type="DrugBank" id="DB08880">
    <property type="generic name" value="Teriflunomide"/>
</dbReference>
<dbReference type="DrugBank" id="DB07646">
    <property type="generic name" value="UNDECYLAMINE-N,N-DIMETHYL-N-OXIDE"/>
</dbReference>
<dbReference type="DrugBank" id="DB15446">
    <property type="generic name" value="Vidofludimus"/>
</dbReference>
<dbReference type="DrugCentral" id="Q02127"/>
<dbReference type="GuidetoPHARMACOLOGY" id="2604"/>
<dbReference type="GlyGen" id="Q02127">
    <property type="glycosylation" value="1 site, 1 N-linked glycan (1 site)"/>
</dbReference>
<dbReference type="iPTMnet" id="Q02127"/>
<dbReference type="PhosphoSitePlus" id="Q02127"/>
<dbReference type="SwissPalm" id="Q02127"/>
<dbReference type="BioMuta" id="DHODH"/>
<dbReference type="DMDM" id="56405372"/>
<dbReference type="jPOST" id="Q02127"/>
<dbReference type="MassIVE" id="Q02127"/>
<dbReference type="PaxDb" id="9606-ENSP00000219240"/>
<dbReference type="PeptideAtlas" id="Q02127"/>
<dbReference type="ProteomicsDB" id="58051"/>
<dbReference type="Pumba" id="Q02127"/>
<dbReference type="TopDownProteomics" id="Q02127"/>
<dbReference type="Antibodypedia" id="2311">
    <property type="antibodies" value="335 antibodies from 35 providers"/>
</dbReference>
<dbReference type="DNASU" id="1723"/>
<dbReference type="Ensembl" id="ENST00000219240.9">
    <property type="protein sequence ID" value="ENSP00000219240.4"/>
    <property type="gene ID" value="ENSG00000102967.12"/>
</dbReference>
<dbReference type="GeneID" id="1723"/>
<dbReference type="KEGG" id="hsa:1723"/>
<dbReference type="MANE-Select" id="ENST00000219240.9">
    <property type="protein sequence ID" value="ENSP00000219240.4"/>
    <property type="RefSeq nucleotide sequence ID" value="NM_001361.5"/>
    <property type="RefSeq protein sequence ID" value="NP_001352.2"/>
</dbReference>
<dbReference type="UCSC" id="uc002fbp.4">
    <property type="organism name" value="human"/>
</dbReference>
<dbReference type="AGR" id="HGNC:2867"/>
<dbReference type="CTD" id="1723"/>
<dbReference type="DisGeNET" id="1723"/>
<dbReference type="GeneCards" id="DHODH"/>
<dbReference type="HGNC" id="HGNC:2867">
    <property type="gene designation" value="DHODH"/>
</dbReference>
<dbReference type="HPA" id="ENSG00000102967">
    <property type="expression patterns" value="Tissue enriched (liver)"/>
</dbReference>
<dbReference type="MalaCards" id="DHODH"/>
<dbReference type="MIM" id="126064">
    <property type="type" value="gene"/>
</dbReference>
<dbReference type="MIM" id="263750">
    <property type="type" value="phenotype"/>
</dbReference>
<dbReference type="neXtProt" id="NX_Q02127"/>
<dbReference type="OpenTargets" id="ENSG00000102967"/>
<dbReference type="Orphanet" id="246">
    <property type="disease" value="Postaxial acrofacial dysostosis"/>
</dbReference>
<dbReference type="PharmGKB" id="PA27327"/>
<dbReference type="VEuPathDB" id="HostDB:ENSG00000102967"/>
<dbReference type="eggNOG" id="KOG1436">
    <property type="taxonomic scope" value="Eukaryota"/>
</dbReference>
<dbReference type="GeneTree" id="ENSGT00500000044924"/>
<dbReference type="InParanoid" id="Q02127"/>
<dbReference type="OMA" id="ERIKMGA"/>
<dbReference type="OrthoDB" id="14784at2759"/>
<dbReference type="PAN-GO" id="Q02127">
    <property type="GO annotations" value="4 GO annotations based on evolutionary models"/>
</dbReference>
<dbReference type="PhylomeDB" id="Q02127"/>
<dbReference type="TreeFam" id="TF105973"/>
<dbReference type="BRENDA" id="1.3.5.2">
    <property type="organism ID" value="2681"/>
</dbReference>
<dbReference type="PathwayCommons" id="Q02127"/>
<dbReference type="Reactome" id="R-HSA-500753">
    <property type="pathway name" value="Pyrimidine biosynthesis"/>
</dbReference>
<dbReference type="SABIO-RK" id="Q02127"/>
<dbReference type="SignaLink" id="Q02127"/>
<dbReference type="SIGNOR" id="Q02127"/>
<dbReference type="UniPathway" id="UPA00070">
    <property type="reaction ID" value="UER00946"/>
</dbReference>
<dbReference type="BioGRID-ORCS" id="1723">
    <property type="hits" value="293 hits in 1178 CRISPR screens"/>
</dbReference>
<dbReference type="ChiTaRS" id="DHODH">
    <property type="organism name" value="human"/>
</dbReference>
<dbReference type="EvolutionaryTrace" id="Q02127"/>
<dbReference type="GenomeRNAi" id="1723"/>
<dbReference type="Pharos" id="Q02127">
    <property type="development level" value="Tclin"/>
</dbReference>
<dbReference type="PRO" id="PR:Q02127"/>
<dbReference type="Proteomes" id="UP000005640">
    <property type="component" value="Chromosome 16"/>
</dbReference>
<dbReference type="RNAct" id="Q02127">
    <property type="molecule type" value="protein"/>
</dbReference>
<dbReference type="Bgee" id="ENSG00000102967">
    <property type="expression patterns" value="Expressed in right lobe of liver and 109 other cell types or tissues"/>
</dbReference>
<dbReference type="ExpressionAtlas" id="Q02127">
    <property type="expression patterns" value="baseline and differential"/>
</dbReference>
<dbReference type="GO" id="GO:0005829">
    <property type="term" value="C:cytosol"/>
    <property type="evidence" value="ECO:0000314"/>
    <property type="project" value="HPA"/>
</dbReference>
<dbReference type="GO" id="GO:0005743">
    <property type="term" value="C:mitochondrial inner membrane"/>
    <property type="evidence" value="ECO:0000318"/>
    <property type="project" value="GO_Central"/>
</dbReference>
<dbReference type="GO" id="GO:0005739">
    <property type="term" value="C:mitochondrion"/>
    <property type="evidence" value="ECO:0000314"/>
    <property type="project" value="HPA"/>
</dbReference>
<dbReference type="GO" id="GO:0005654">
    <property type="term" value="C:nucleoplasm"/>
    <property type="evidence" value="ECO:0000314"/>
    <property type="project" value="HPA"/>
</dbReference>
<dbReference type="GO" id="GO:0004151">
    <property type="term" value="F:dihydroorotase activity"/>
    <property type="evidence" value="ECO:0007669"/>
    <property type="project" value="Ensembl"/>
</dbReference>
<dbReference type="GO" id="GO:0106430">
    <property type="term" value="F:dihydroorotate dehydrogenase (quinone) activity"/>
    <property type="evidence" value="ECO:0000314"/>
    <property type="project" value="FlyBase"/>
</dbReference>
<dbReference type="GO" id="GO:0004152">
    <property type="term" value="F:dihydroorotate dehydrogenase activity"/>
    <property type="evidence" value="ECO:0000318"/>
    <property type="project" value="GO_Central"/>
</dbReference>
<dbReference type="GO" id="GO:0006207">
    <property type="term" value="P:'de novo' pyrimidine nucleobase biosynthetic process"/>
    <property type="evidence" value="ECO:0000318"/>
    <property type="project" value="GO_Central"/>
</dbReference>
<dbReference type="GO" id="GO:0044205">
    <property type="term" value="P:'de novo' UMP biosynthetic process"/>
    <property type="evidence" value="ECO:0007669"/>
    <property type="project" value="UniProtKB-UniPathway"/>
</dbReference>
<dbReference type="GO" id="GO:0009220">
    <property type="term" value="P:pyrimidine ribonucleotide biosynthetic process"/>
    <property type="evidence" value="ECO:0000318"/>
    <property type="project" value="GO_Central"/>
</dbReference>
<dbReference type="GO" id="GO:0006225">
    <property type="term" value="P:UDP biosynthetic process"/>
    <property type="evidence" value="ECO:0007669"/>
    <property type="project" value="Ensembl"/>
</dbReference>
<dbReference type="CDD" id="cd04738">
    <property type="entry name" value="DHOD_2_like"/>
    <property type="match status" value="1"/>
</dbReference>
<dbReference type="FunFam" id="3.20.20.70:FF:000066">
    <property type="entry name" value="Dihydroorotate dehydrogenase (quinone), mitochondrial"/>
    <property type="match status" value="1"/>
</dbReference>
<dbReference type="Gene3D" id="3.20.20.70">
    <property type="entry name" value="Aldolase class I"/>
    <property type="match status" value="1"/>
</dbReference>
<dbReference type="InterPro" id="IPR013785">
    <property type="entry name" value="Aldolase_TIM"/>
</dbReference>
<dbReference type="InterPro" id="IPR050074">
    <property type="entry name" value="DHO_dehydrogenase"/>
</dbReference>
<dbReference type="InterPro" id="IPR005719">
    <property type="entry name" value="Dihydroorotate_DH_2"/>
</dbReference>
<dbReference type="InterPro" id="IPR005720">
    <property type="entry name" value="Dihydroorotate_DH_cat"/>
</dbReference>
<dbReference type="InterPro" id="IPR001295">
    <property type="entry name" value="Dihydroorotate_DH_CS"/>
</dbReference>
<dbReference type="NCBIfam" id="NF003645">
    <property type="entry name" value="PRK05286.1-2"/>
    <property type="match status" value="1"/>
</dbReference>
<dbReference type="NCBIfam" id="NF003652">
    <property type="entry name" value="PRK05286.2-5"/>
    <property type="match status" value="1"/>
</dbReference>
<dbReference type="NCBIfam" id="TIGR01036">
    <property type="entry name" value="pyrD_sub2"/>
    <property type="match status" value="1"/>
</dbReference>
<dbReference type="PANTHER" id="PTHR48109:SF4">
    <property type="entry name" value="DIHYDROOROTATE DEHYDROGENASE (QUINONE), MITOCHONDRIAL"/>
    <property type="match status" value="1"/>
</dbReference>
<dbReference type="PANTHER" id="PTHR48109">
    <property type="entry name" value="DIHYDROOROTATE DEHYDROGENASE (QUINONE), MITOCHONDRIAL-RELATED"/>
    <property type="match status" value="1"/>
</dbReference>
<dbReference type="Pfam" id="PF01180">
    <property type="entry name" value="DHO_dh"/>
    <property type="match status" value="1"/>
</dbReference>
<dbReference type="SUPFAM" id="SSF51395">
    <property type="entry name" value="FMN-linked oxidoreductases"/>
    <property type="match status" value="1"/>
</dbReference>
<dbReference type="PROSITE" id="PS00911">
    <property type="entry name" value="DHODEHASE_1"/>
    <property type="match status" value="1"/>
</dbReference>
<dbReference type="PROSITE" id="PS00912">
    <property type="entry name" value="DHODEHASE_2"/>
    <property type="match status" value="1"/>
</dbReference>